<reference key="1">
    <citation type="journal article" date="2005" name="PLoS Genet.">
        <title>Life in hot carbon monoxide: the complete genome sequence of Carboxydothermus hydrogenoformans Z-2901.</title>
        <authorList>
            <person name="Wu M."/>
            <person name="Ren Q."/>
            <person name="Durkin A.S."/>
            <person name="Daugherty S.C."/>
            <person name="Brinkac L.M."/>
            <person name="Dodson R.J."/>
            <person name="Madupu R."/>
            <person name="Sullivan S.A."/>
            <person name="Kolonay J.F."/>
            <person name="Nelson W.C."/>
            <person name="Tallon L.J."/>
            <person name="Jones K.M."/>
            <person name="Ulrich L.E."/>
            <person name="Gonzalez J.M."/>
            <person name="Zhulin I.B."/>
            <person name="Robb F.T."/>
            <person name="Eisen J.A."/>
        </authorList>
    </citation>
    <scope>NUCLEOTIDE SEQUENCE [LARGE SCALE GENOMIC DNA]</scope>
    <source>
        <strain>ATCC BAA-161 / DSM 6008 / Z-2901</strain>
    </source>
</reference>
<name>ATPB_CARHZ</name>
<comment type="function">
    <text evidence="1">Produces ATP from ADP in the presence of a proton gradient across the membrane. The catalytic sites are hosted primarily by the beta subunits.</text>
</comment>
<comment type="catalytic activity">
    <reaction evidence="1">
        <text>ATP + H2O + 4 H(+)(in) = ADP + phosphate + 5 H(+)(out)</text>
        <dbReference type="Rhea" id="RHEA:57720"/>
        <dbReference type="ChEBI" id="CHEBI:15377"/>
        <dbReference type="ChEBI" id="CHEBI:15378"/>
        <dbReference type="ChEBI" id="CHEBI:30616"/>
        <dbReference type="ChEBI" id="CHEBI:43474"/>
        <dbReference type="ChEBI" id="CHEBI:456216"/>
        <dbReference type="EC" id="7.1.2.2"/>
    </reaction>
</comment>
<comment type="subunit">
    <text evidence="1">F-type ATPases have 2 components, CF(1) - the catalytic core - and CF(0) - the membrane proton channel. CF(1) has five subunits: alpha(3), beta(3), gamma(1), delta(1), epsilon(1). CF(0) has three main subunits: a(1), b(2) and c(9-12). The alpha and beta chains form an alternating ring which encloses part of the gamma chain. CF(1) is attached to CF(0) by a central stalk formed by the gamma and epsilon chains, while a peripheral stalk is formed by the delta and b chains.</text>
</comment>
<comment type="subcellular location">
    <subcellularLocation>
        <location evidence="1">Cell membrane</location>
        <topology evidence="1">Peripheral membrane protein</topology>
    </subcellularLocation>
</comment>
<comment type="similarity">
    <text evidence="1">Belongs to the ATPase alpha/beta chains family.</text>
</comment>
<accession>Q3A946</accession>
<organism>
    <name type="scientific">Carboxydothermus hydrogenoformans (strain ATCC BAA-161 / DSM 6008 / Z-2901)</name>
    <dbReference type="NCBI Taxonomy" id="246194"/>
    <lineage>
        <taxon>Bacteria</taxon>
        <taxon>Bacillati</taxon>
        <taxon>Bacillota</taxon>
        <taxon>Clostridia</taxon>
        <taxon>Thermoanaerobacterales</taxon>
        <taxon>Thermoanaerobacteraceae</taxon>
        <taxon>Carboxydothermus</taxon>
    </lineage>
</organism>
<evidence type="ECO:0000255" key="1">
    <source>
        <dbReference type="HAMAP-Rule" id="MF_01347"/>
    </source>
</evidence>
<protein>
    <recommendedName>
        <fullName evidence="1">ATP synthase subunit beta</fullName>
        <ecNumber evidence="1">7.1.2.2</ecNumber>
    </recommendedName>
    <alternativeName>
        <fullName evidence="1">ATP synthase F1 sector subunit beta</fullName>
    </alternativeName>
    <alternativeName>
        <fullName evidence="1">F-ATPase subunit beta</fullName>
    </alternativeName>
</protein>
<feature type="chain" id="PRO_0000254238" description="ATP synthase subunit beta">
    <location>
        <begin position="1"/>
        <end position="473"/>
    </location>
</feature>
<feature type="binding site" evidence="1">
    <location>
        <begin position="158"/>
        <end position="165"/>
    </location>
    <ligand>
        <name>ATP</name>
        <dbReference type="ChEBI" id="CHEBI:30616"/>
    </ligand>
</feature>
<sequence>MNVGRVVQVIGVVVDVEFEPGKVPPIYNALKIRSEDQDTPTEVPINLTLEVAQHLGNNRVRAVAMSSTDGLVRGMKVVDTGAPITVPVGRPVLGRLLNVLGEPIDGKGPVESDHYYPIHRPAPPLEEQSTRAEILETGIKVIDLLVPFLKGGKIGLFGGAGVGKTVIVMELINNIAKQHGGISVFAGVGERTREGNDLYHEMKEAGVLDKTIMVFGQMNEPPGVRLRVGLTGLTMAEYFRDEEGQDVLLFIDNIFRFTQAGSEVSALLGRMPSAVGYQPTLATEMGQLQERITSTRKGSITSVQAVYVPADDLTDPAPATTFAHLDATVVLSRQIAELGIYPAVDPLDSTSRILDPHIVGEEHYQVARGVQRVLQRYKELQDIIAILGMDELSDEDKLIVARARKLQRFLSQPFTVAEAFTGRPGKYVPVKETIRGFKEILEGKHDDIPETCFYMAGTIDEVVERARELEGSA</sequence>
<gene>
    <name evidence="1" type="primary">atpD</name>
    <name type="ordered locus">CHY_2545</name>
</gene>
<dbReference type="EC" id="7.1.2.2" evidence="1"/>
<dbReference type="EMBL" id="CP000141">
    <property type="protein sequence ID" value="ABB14108.1"/>
    <property type="molecule type" value="Genomic_DNA"/>
</dbReference>
<dbReference type="RefSeq" id="WP_011345411.1">
    <property type="nucleotide sequence ID" value="NC_007503.1"/>
</dbReference>
<dbReference type="SMR" id="Q3A946"/>
<dbReference type="FunCoup" id="Q3A946">
    <property type="interactions" value="320"/>
</dbReference>
<dbReference type="STRING" id="246194.CHY_2545"/>
<dbReference type="KEGG" id="chy:CHY_2545"/>
<dbReference type="eggNOG" id="COG0055">
    <property type="taxonomic scope" value="Bacteria"/>
</dbReference>
<dbReference type="HOGENOM" id="CLU_022398_0_2_9"/>
<dbReference type="InParanoid" id="Q3A946"/>
<dbReference type="OrthoDB" id="9803053at2"/>
<dbReference type="Proteomes" id="UP000002706">
    <property type="component" value="Chromosome"/>
</dbReference>
<dbReference type="GO" id="GO:0005886">
    <property type="term" value="C:plasma membrane"/>
    <property type="evidence" value="ECO:0007669"/>
    <property type="project" value="UniProtKB-SubCell"/>
</dbReference>
<dbReference type="GO" id="GO:0045259">
    <property type="term" value="C:proton-transporting ATP synthase complex"/>
    <property type="evidence" value="ECO:0007669"/>
    <property type="project" value="UniProtKB-KW"/>
</dbReference>
<dbReference type="GO" id="GO:0005524">
    <property type="term" value="F:ATP binding"/>
    <property type="evidence" value="ECO:0007669"/>
    <property type="project" value="UniProtKB-UniRule"/>
</dbReference>
<dbReference type="GO" id="GO:0016887">
    <property type="term" value="F:ATP hydrolysis activity"/>
    <property type="evidence" value="ECO:0007669"/>
    <property type="project" value="InterPro"/>
</dbReference>
<dbReference type="GO" id="GO:0046933">
    <property type="term" value="F:proton-transporting ATP synthase activity, rotational mechanism"/>
    <property type="evidence" value="ECO:0007669"/>
    <property type="project" value="UniProtKB-UniRule"/>
</dbReference>
<dbReference type="CDD" id="cd18110">
    <property type="entry name" value="ATP-synt_F1_beta_C"/>
    <property type="match status" value="1"/>
</dbReference>
<dbReference type="CDD" id="cd18115">
    <property type="entry name" value="ATP-synt_F1_beta_N"/>
    <property type="match status" value="1"/>
</dbReference>
<dbReference type="CDD" id="cd01133">
    <property type="entry name" value="F1-ATPase_beta_CD"/>
    <property type="match status" value="1"/>
</dbReference>
<dbReference type="FunFam" id="1.10.1140.10:FF:000001">
    <property type="entry name" value="ATP synthase subunit beta"/>
    <property type="match status" value="1"/>
</dbReference>
<dbReference type="FunFam" id="2.40.10.170:FF:000005">
    <property type="entry name" value="ATP synthase subunit beta"/>
    <property type="match status" value="1"/>
</dbReference>
<dbReference type="FunFam" id="3.40.50.300:FF:000026">
    <property type="entry name" value="ATP synthase subunit beta"/>
    <property type="match status" value="1"/>
</dbReference>
<dbReference type="Gene3D" id="2.40.10.170">
    <property type="match status" value="1"/>
</dbReference>
<dbReference type="Gene3D" id="1.10.1140.10">
    <property type="entry name" value="Bovine Mitochondrial F1-atpase, Atp Synthase Beta Chain, Chain D, domain 3"/>
    <property type="match status" value="1"/>
</dbReference>
<dbReference type="Gene3D" id="3.40.50.300">
    <property type="entry name" value="P-loop containing nucleotide triphosphate hydrolases"/>
    <property type="match status" value="1"/>
</dbReference>
<dbReference type="HAMAP" id="MF_01347">
    <property type="entry name" value="ATP_synth_beta_bact"/>
    <property type="match status" value="1"/>
</dbReference>
<dbReference type="InterPro" id="IPR003593">
    <property type="entry name" value="AAA+_ATPase"/>
</dbReference>
<dbReference type="InterPro" id="IPR055190">
    <property type="entry name" value="ATP-synt_VA_C"/>
</dbReference>
<dbReference type="InterPro" id="IPR005722">
    <property type="entry name" value="ATP_synth_F1_bsu"/>
</dbReference>
<dbReference type="InterPro" id="IPR020003">
    <property type="entry name" value="ATPase_a/bsu_AS"/>
</dbReference>
<dbReference type="InterPro" id="IPR050053">
    <property type="entry name" value="ATPase_alpha/beta_chains"/>
</dbReference>
<dbReference type="InterPro" id="IPR004100">
    <property type="entry name" value="ATPase_F1/V1/A1_a/bsu_N"/>
</dbReference>
<dbReference type="InterPro" id="IPR036121">
    <property type="entry name" value="ATPase_F1/V1/A1_a/bsu_N_sf"/>
</dbReference>
<dbReference type="InterPro" id="IPR000194">
    <property type="entry name" value="ATPase_F1/V1/A1_a/bsu_nucl-bd"/>
</dbReference>
<dbReference type="InterPro" id="IPR024034">
    <property type="entry name" value="ATPase_F1/V1_b/a_C"/>
</dbReference>
<dbReference type="InterPro" id="IPR027417">
    <property type="entry name" value="P-loop_NTPase"/>
</dbReference>
<dbReference type="NCBIfam" id="TIGR01039">
    <property type="entry name" value="atpD"/>
    <property type="match status" value="1"/>
</dbReference>
<dbReference type="PANTHER" id="PTHR15184">
    <property type="entry name" value="ATP SYNTHASE"/>
    <property type="match status" value="1"/>
</dbReference>
<dbReference type="PANTHER" id="PTHR15184:SF71">
    <property type="entry name" value="ATP SYNTHASE SUBUNIT BETA, MITOCHONDRIAL"/>
    <property type="match status" value="1"/>
</dbReference>
<dbReference type="Pfam" id="PF00006">
    <property type="entry name" value="ATP-synt_ab"/>
    <property type="match status" value="1"/>
</dbReference>
<dbReference type="Pfam" id="PF02874">
    <property type="entry name" value="ATP-synt_ab_N"/>
    <property type="match status" value="1"/>
</dbReference>
<dbReference type="Pfam" id="PF22919">
    <property type="entry name" value="ATP-synt_VA_C"/>
    <property type="match status" value="1"/>
</dbReference>
<dbReference type="PIRSF" id="PIRSF039072">
    <property type="entry name" value="ATPase_subunit_beta"/>
    <property type="match status" value="1"/>
</dbReference>
<dbReference type="SMART" id="SM00382">
    <property type="entry name" value="AAA"/>
    <property type="match status" value="1"/>
</dbReference>
<dbReference type="SUPFAM" id="SSF47917">
    <property type="entry name" value="C-terminal domain of alpha and beta subunits of F1 ATP synthase"/>
    <property type="match status" value="1"/>
</dbReference>
<dbReference type="SUPFAM" id="SSF50615">
    <property type="entry name" value="N-terminal domain of alpha and beta subunits of F1 ATP synthase"/>
    <property type="match status" value="1"/>
</dbReference>
<dbReference type="SUPFAM" id="SSF52540">
    <property type="entry name" value="P-loop containing nucleoside triphosphate hydrolases"/>
    <property type="match status" value="1"/>
</dbReference>
<dbReference type="PROSITE" id="PS00152">
    <property type="entry name" value="ATPASE_ALPHA_BETA"/>
    <property type="match status" value="1"/>
</dbReference>
<keyword id="KW-0066">ATP synthesis</keyword>
<keyword id="KW-0067">ATP-binding</keyword>
<keyword id="KW-1003">Cell membrane</keyword>
<keyword id="KW-0139">CF(1)</keyword>
<keyword id="KW-0375">Hydrogen ion transport</keyword>
<keyword id="KW-0406">Ion transport</keyword>
<keyword id="KW-0472">Membrane</keyword>
<keyword id="KW-0547">Nucleotide-binding</keyword>
<keyword id="KW-1185">Reference proteome</keyword>
<keyword id="KW-1278">Translocase</keyword>
<keyword id="KW-0813">Transport</keyword>
<proteinExistence type="inferred from homology"/>